<organism>
    <name type="scientific">Oryza nivara</name>
    <name type="common">Indian wild rice</name>
    <name type="synonym">Oryza sativa f. spontanea</name>
    <dbReference type="NCBI Taxonomy" id="4536"/>
    <lineage>
        <taxon>Eukaryota</taxon>
        <taxon>Viridiplantae</taxon>
        <taxon>Streptophyta</taxon>
        <taxon>Embryophyta</taxon>
        <taxon>Tracheophyta</taxon>
        <taxon>Spermatophyta</taxon>
        <taxon>Magnoliopsida</taxon>
        <taxon>Liliopsida</taxon>
        <taxon>Poales</taxon>
        <taxon>Poaceae</taxon>
        <taxon>BOP clade</taxon>
        <taxon>Oryzoideae</taxon>
        <taxon>Oryzeae</taxon>
        <taxon>Oryzinae</taxon>
        <taxon>Oryza</taxon>
    </lineage>
</organism>
<dbReference type="EMBL" id="AP006728">
    <property type="protein sequence ID" value="BAD26762.1"/>
    <property type="molecule type" value="Genomic_DNA"/>
</dbReference>
<dbReference type="RefSeq" id="YP_052733.1">
    <property type="nucleotide sequence ID" value="NC_005973.1"/>
</dbReference>
<dbReference type="SMR" id="Q6ENJ0"/>
<dbReference type="STRING" id="4536.Q6ENJ0"/>
<dbReference type="GeneID" id="2885949"/>
<dbReference type="Proteomes" id="UP000006591">
    <property type="component" value="Chloroplast"/>
</dbReference>
<dbReference type="GO" id="GO:0009535">
    <property type="term" value="C:chloroplast thylakoid membrane"/>
    <property type="evidence" value="ECO:0007669"/>
    <property type="project" value="UniProtKB-SubCell"/>
</dbReference>
<dbReference type="GO" id="GO:0009523">
    <property type="term" value="C:photosystem II"/>
    <property type="evidence" value="ECO:0007669"/>
    <property type="project" value="UniProtKB-KW"/>
</dbReference>
<dbReference type="GO" id="GO:0009536">
    <property type="term" value="C:plastid"/>
    <property type="evidence" value="ECO:0000305"/>
    <property type="project" value="Gramene"/>
</dbReference>
<dbReference type="GO" id="GO:0016168">
    <property type="term" value="F:chlorophyll binding"/>
    <property type="evidence" value="ECO:0007669"/>
    <property type="project" value="UniProtKB-UniRule"/>
</dbReference>
<dbReference type="GO" id="GO:0045156">
    <property type="term" value="F:electron transporter, transferring electrons within the cyclic electron transport pathway of photosynthesis activity"/>
    <property type="evidence" value="ECO:0007669"/>
    <property type="project" value="InterPro"/>
</dbReference>
<dbReference type="GO" id="GO:0046872">
    <property type="term" value="F:metal ion binding"/>
    <property type="evidence" value="ECO:0007669"/>
    <property type="project" value="UniProtKB-KW"/>
</dbReference>
<dbReference type="GO" id="GO:0009772">
    <property type="term" value="P:photosynthetic electron transport in photosystem II"/>
    <property type="evidence" value="ECO:0007669"/>
    <property type="project" value="InterPro"/>
</dbReference>
<dbReference type="FunFam" id="1.10.10.670:FF:000001">
    <property type="entry name" value="Photosystem II CP43 reaction center protein"/>
    <property type="match status" value="1"/>
</dbReference>
<dbReference type="Gene3D" id="1.10.10.670">
    <property type="entry name" value="photosystem ii from thermosynechococcus elongatus"/>
    <property type="match status" value="1"/>
</dbReference>
<dbReference type="HAMAP" id="MF_01496">
    <property type="entry name" value="PSII_PsbC_CP43"/>
    <property type="match status" value="1"/>
</dbReference>
<dbReference type="InterPro" id="IPR000932">
    <property type="entry name" value="PS_antenna-like"/>
</dbReference>
<dbReference type="InterPro" id="IPR036001">
    <property type="entry name" value="PS_II_antenna-like_sf"/>
</dbReference>
<dbReference type="InterPro" id="IPR005869">
    <property type="entry name" value="PSII_PsbC"/>
</dbReference>
<dbReference type="InterPro" id="IPR044900">
    <property type="entry name" value="PSII_PsbC_sf"/>
</dbReference>
<dbReference type="NCBIfam" id="TIGR01153">
    <property type="entry name" value="psbC"/>
    <property type="match status" value="1"/>
</dbReference>
<dbReference type="Pfam" id="PF00421">
    <property type="entry name" value="PSII"/>
    <property type="match status" value="1"/>
</dbReference>
<dbReference type="SUPFAM" id="SSF161077">
    <property type="entry name" value="Photosystem II antenna protein-like"/>
    <property type="match status" value="1"/>
</dbReference>
<evidence type="ECO:0000255" key="1">
    <source>
        <dbReference type="HAMAP-Rule" id="MF_01496"/>
    </source>
</evidence>
<evidence type="ECO:0000312" key="2">
    <source>
        <dbReference type="Proteomes" id="UP000006591"/>
    </source>
</evidence>
<gene>
    <name evidence="1" type="primary">psbC</name>
</gene>
<accession>Q6ENJ0</accession>
<reference key="1">
    <citation type="journal article" date="2004" name="Gene">
        <title>The complete nucleotide sequence of wild rice (Oryza nivara) chloroplast genome: first genome wide comparative sequence analysis of wild and cultivated rice.</title>
        <authorList>
            <person name="Masood M.S."/>
            <person name="Nishikawa T."/>
            <person name="Fukuoka S."/>
            <person name="Njenga P.K."/>
            <person name="Tsudzuki T."/>
            <person name="Kadowaki K."/>
        </authorList>
    </citation>
    <scope>NUCLEOTIDE SEQUENCE [LARGE SCALE GENOMIC DNA]</scope>
    <source>
        <strain evidence="2">cv. SL10</strain>
    </source>
</reference>
<geneLocation type="chloroplast"/>
<proteinExistence type="inferred from homology"/>
<keyword id="KW-0007">Acetylation</keyword>
<keyword id="KW-0148">Chlorophyll</keyword>
<keyword id="KW-0150">Chloroplast</keyword>
<keyword id="KW-0157">Chromophore</keyword>
<keyword id="KW-0464">Manganese</keyword>
<keyword id="KW-0472">Membrane</keyword>
<keyword id="KW-0479">Metal-binding</keyword>
<keyword id="KW-0597">Phosphoprotein</keyword>
<keyword id="KW-0602">Photosynthesis</keyword>
<keyword id="KW-0604">Photosystem II</keyword>
<keyword id="KW-0934">Plastid</keyword>
<keyword id="KW-1185">Reference proteome</keyword>
<keyword id="KW-0793">Thylakoid</keyword>
<keyword id="KW-0812">Transmembrane</keyword>
<keyword id="KW-1133">Transmembrane helix</keyword>
<sequence length="473" mass="52076">MKILYSLRRFYHVETLFNGTFVLAGRDQETTGFAWWAGNARLINLSGKLLGAHVAHAGLIVFWAGAMNLFEVAHFVPEKPMYEQGLILLPHLATLGWGVGPGGEVLDTFPYFVSGVLHLISSAVLGFGGIYHALLGPETLEESFPFFGYVWKDRNKMTTILGIHLILLGIGAFLLVLKALYFGGIYDTWAPGGGDVRKITNLTLSPGVIFGYLLKSPFGGEGWIVSVDDLEDIIGGHVWLGFICVFGGIWHILTKPFAWARRAFVWSGEAYLSYSLGALSVFGFIACCFVWFNNTAYPSEFYGPTGPEASQAQAFTFLVRDQRLGANVGSAQGPTGLGKYLMRSPTGEVIFGGETMRFWDLRAPWLEPLRGPNGLDLSRLKKDIQPWQERRSAEYMTHAPLGSLNSVGGVATEINAVNYVSPRSWLATSHFVLGFFFFVGHLWHAGRARAAAAGFEKGIDRDLEPVLYMTPLN</sequence>
<name>PSBC_ORYNI</name>
<feature type="propeptide" id="PRO_0000431184" evidence="1">
    <location>
        <begin position="1"/>
        <end position="14"/>
    </location>
</feature>
<feature type="chain" id="PRO_0000077522" description="Photosystem II CP43 reaction center protein" evidence="1">
    <location>
        <begin position="15"/>
        <end position="473"/>
    </location>
</feature>
<feature type="transmembrane region" description="Helical" evidence="1">
    <location>
        <begin position="69"/>
        <end position="93"/>
    </location>
</feature>
<feature type="transmembrane region" description="Helical" evidence="1">
    <location>
        <begin position="134"/>
        <end position="155"/>
    </location>
</feature>
<feature type="transmembrane region" description="Helical" evidence="1">
    <location>
        <begin position="178"/>
        <end position="200"/>
    </location>
</feature>
<feature type="transmembrane region" description="Helical" evidence="1">
    <location>
        <begin position="255"/>
        <end position="275"/>
    </location>
</feature>
<feature type="transmembrane region" description="Helical" evidence="1">
    <location>
        <begin position="291"/>
        <end position="312"/>
    </location>
</feature>
<feature type="transmembrane region" description="Helical" evidence="1">
    <location>
        <begin position="447"/>
        <end position="471"/>
    </location>
</feature>
<feature type="binding site" evidence="1">
    <location>
        <position position="367"/>
    </location>
    <ligand>
        <name>[CaMn4O5] cluster</name>
        <dbReference type="ChEBI" id="CHEBI:189552"/>
    </ligand>
</feature>
<feature type="modified residue" description="N-acetylthreonine" evidence="1">
    <location>
        <position position="15"/>
    </location>
</feature>
<feature type="modified residue" description="Phosphothreonine" evidence="1">
    <location>
        <position position="15"/>
    </location>
</feature>
<comment type="function">
    <text evidence="1">One of the components of the core complex of photosystem II (PSII). It binds chlorophyll and helps catalyze the primary light-induced photochemical processes of PSII. PSII is a light-driven water:plastoquinone oxidoreductase, using light energy to abstract electrons from H(2)O, generating O(2) and a proton gradient subsequently used for ATP formation.</text>
</comment>
<comment type="cofactor">
    <text evidence="1">Binds multiple chlorophylls and provides some of the ligands for the Ca-4Mn-5O cluster of the oxygen-evolving complex. It may also provide a ligand for a Cl- that is required for oxygen evolution. PSII binds additional chlorophylls, carotenoids and specific lipids.</text>
</comment>
<comment type="subunit">
    <text evidence="1">PSII is composed of 1 copy each of membrane proteins PsbA, PsbB, PsbC, PsbD, PsbE, PsbF, PsbH, PsbI, PsbJ, PsbK, PsbL, PsbM, PsbT, PsbX, PsbY, PsbZ, Psb30/Ycf12, at least 3 peripheral proteins of the oxygen-evolving complex and a large number of cofactors. It forms dimeric complexes.</text>
</comment>
<comment type="subcellular location">
    <subcellularLocation>
        <location evidence="1">Plastid</location>
        <location evidence="1">Chloroplast thylakoid membrane</location>
        <topology evidence="1">Multi-pass membrane protein</topology>
    </subcellularLocation>
</comment>
<comment type="similarity">
    <text evidence="1">Belongs to the PsbB/PsbC family. PsbC subfamily.</text>
</comment>
<protein>
    <recommendedName>
        <fullName evidence="1">Photosystem II CP43 reaction center protein</fullName>
    </recommendedName>
    <alternativeName>
        <fullName evidence="1">PSII 43 kDa protein</fullName>
    </alternativeName>
    <alternativeName>
        <fullName evidence="1">Protein CP-43</fullName>
    </alternativeName>
</protein>